<gene>
    <name type="primary">Wfikkn1</name>
    <name type="synonym">Oc29</name>
</gene>
<proteinExistence type="evidence at transcript level"/>
<dbReference type="EMBL" id="AABR03073234">
    <property type="status" value="NOT_ANNOTATED_CDS"/>
    <property type="molecule type" value="Genomic_DNA"/>
</dbReference>
<dbReference type="RefSeq" id="NP_001123248.1">
    <property type="nucleotide sequence ID" value="NM_001129776.1"/>
</dbReference>
<dbReference type="FunCoup" id="P0C5J5">
    <property type="interactions" value="73"/>
</dbReference>
<dbReference type="STRING" id="10116.ENSRNOP00000056900"/>
<dbReference type="GlyCosmos" id="P0C5J5">
    <property type="glycosylation" value="1 site, No reported glycans"/>
</dbReference>
<dbReference type="GlyGen" id="P0C5J5">
    <property type="glycosylation" value="3 sites"/>
</dbReference>
<dbReference type="PhosphoSitePlus" id="P0C5J5"/>
<dbReference type="PaxDb" id="10116-ENSRNOP00000056900"/>
<dbReference type="GeneID" id="363555"/>
<dbReference type="KEGG" id="rno:363555"/>
<dbReference type="UCSC" id="RGD:1565835">
    <property type="organism name" value="rat"/>
</dbReference>
<dbReference type="AGR" id="RGD:1565835"/>
<dbReference type="CTD" id="117166"/>
<dbReference type="RGD" id="1565835">
    <property type="gene designation" value="Wfikkn1"/>
</dbReference>
<dbReference type="VEuPathDB" id="HostDB:ENSRNOG00000021578"/>
<dbReference type="eggNOG" id="KOG4597">
    <property type="taxonomic scope" value="Eukaryota"/>
</dbReference>
<dbReference type="HOGENOM" id="CLU_037211_1_0_1"/>
<dbReference type="InParanoid" id="P0C5J5"/>
<dbReference type="OrthoDB" id="22962at9989"/>
<dbReference type="PhylomeDB" id="P0C5J5"/>
<dbReference type="TreeFam" id="TF315349"/>
<dbReference type="PRO" id="PR:P0C5J5"/>
<dbReference type="Proteomes" id="UP000002494">
    <property type="component" value="Chromosome 10"/>
</dbReference>
<dbReference type="Bgee" id="ENSRNOG00000021578">
    <property type="expression patterns" value="Expressed in pancreas and 19 other cell types or tissues"/>
</dbReference>
<dbReference type="GO" id="GO:0005576">
    <property type="term" value="C:extracellular region"/>
    <property type="evidence" value="ECO:0000266"/>
    <property type="project" value="RGD"/>
</dbReference>
<dbReference type="GO" id="GO:0005615">
    <property type="term" value="C:extracellular space"/>
    <property type="evidence" value="ECO:0000318"/>
    <property type="project" value="GO_Central"/>
</dbReference>
<dbReference type="GO" id="GO:0048019">
    <property type="term" value="F:receptor antagonist activity"/>
    <property type="evidence" value="ECO:0000266"/>
    <property type="project" value="RGD"/>
</dbReference>
<dbReference type="GO" id="GO:0004867">
    <property type="term" value="F:serine-type endopeptidase inhibitor activity"/>
    <property type="evidence" value="ECO:0007669"/>
    <property type="project" value="UniProtKB-KW"/>
</dbReference>
<dbReference type="GO" id="GO:0050431">
    <property type="term" value="F:transforming growth factor beta binding"/>
    <property type="evidence" value="ECO:0000266"/>
    <property type="project" value="RGD"/>
</dbReference>
<dbReference type="GO" id="GO:0055001">
    <property type="term" value="P:muscle cell development"/>
    <property type="evidence" value="ECO:0000266"/>
    <property type="project" value="RGD"/>
</dbReference>
<dbReference type="GO" id="GO:0030512">
    <property type="term" value="P:negative regulation of transforming growth factor beta receptor signaling pathway"/>
    <property type="evidence" value="ECO:0000266"/>
    <property type="project" value="RGD"/>
</dbReference>
<dbReference type="GO" id="GO:0060021">
    <property type="term" value="P:roof of mouth development"/>
    <property type="evidence" value="ECO:0000266"/>
    <property type="project" value="RGD"/>
</dbReference>
<dbReference type="GO" id="GO:0001501">
    <property type="term" value="P:skeletal system development"/>
    <property type="evidence" value="ECO:0000266"/>
    <property type="project" value="RGD"/>
</dbReference>
<dbReference type="GO" id="GO:0007179">
    <property type="term" value="P:transforming growth factor beta receptor signaling pathway"/>
    <property type="evidence" value="ECO:0000318"/>
    <property type="project" value="GO_Central"/>
</dbReference>
<dbReference type="CDD" id="cd05765">
    <property type="entry name" value="IgI_3_WFIKKN-like"/>
    <property type="match status" value="1"/>
</dbReference>
<dbReference type="CDD" id="cd00104">
    <property type="entry name" value="KAZAL_FS"/>
    <property type="match status" value="1"/>
</dbReference>
<dbReference type="CDD" id="cd22606">
    <property type="entry name" value="Kunitz_WFIKKN_2-like"/>
    <property type="match status" value="1"/>
</dbReference>
<dbReference type="FunFam" id="4.10.410.10:FF:000002">
    <property type="entry name" value="WAP, follistatin/kazal, immunoglobulin, kunitz and netrin domain-containing 2"/>
    <property type="match status" value="1"/>
</dbReference>
<dbReference type="FunFam" id="4.10.410.10:FF:000022">
    <property type="entry name" value="WAP, Kazal, immunoglobulin, Kunitz and NTR domain-containing protein 1"/>
    <property type="match status" value="1"/>
</dbReference>
<dbReference type="FunFam" id="2.40.50.120:FF:000004">
    <property type="entry name" value="WAP, Kazal, immunoglobulin, Kunitz and NTR domain-containing protein 2"/>
    <property type="match status" value="1"/>
</dbReference>
<dbReference type="FunFam" id="2.60.40.10:FF:000473">
    <property type="entry name" value="WAP, Kazal, immunoglobulin, Kunitz and NTR domain-containing protein 2"/>
    <property type="match status" value="1"/>
</dbReference>
<dbReference type="FunFam" id="3.30.60.30:FF:000014">
    <property type="entry name" value="WAP, Kazal, immunoglobulin, Kunitz and NTR domain-containing protein 2"/>
    <property type="match status" value="1"/>
</dbReference>
<dbReference type="FunFam" id="4.10.75.10:FF:000002">
    <property type="entry name" value="WAP, Kazal, immunoglobulin, Kunitz and NTR domain-containing protein 2"/>
    <property type="match status" value="1"/>
</dbReference>
<dbReference type="Gene3D" id="2.40.50.120">
    <property type="match status" value="1"/>
</dbReference>
<dbReference type="Gene3D" id="3.30.60.30">
    <property type="match status" value="1"/>
</dbReference>
<dbReference type="Gene3D" id="4.10.75.10">
    <property type="entry name" value="Elafin-like"/>
    <property type="match status" value="1"/>
</dbReference>
<dbReference type="Gene3D" id="2.60.40.10">
    <property type="entry name" value="Immunoglobulins"/>
    <property type="match status" value="1"/>
</dbReference>
<dbReference type="Gene3D" id="4.10.410.10">
    <property type="entry name" value="Pancreatic trypsin inhibitor Kunitz domain"/>
    <property type="match status" value="2"/>
</dbReference>
<dbReference type="InterPro" id="IPR036645">
    <property type="entry name" value="Elafin-like_sf"/>
</dbReference>
<dbReference type="InterPro" id="IPR007110">
    <property type="entry name" value="Ig-like_dom"/>
</dbReference>
<dbReference type="InterPro" id="IPR036179">
    <property type="entry name" value="Ig-like_dom_sf"/>
</dbReference>
<dbReference type="InterPro" id="IPR013783">
    <property type="entry name" value="Ig-like_fold"/>
</dbReference>
<dbReference type="InterPro" id="IPR003599">
    <property type="entry name" value="Ig_sub"/>
</dbReference>
<dbReference type="InterPro" id="IPR003598">
    <property type="entry name" value="Ig_sub2"/>
</dbReference>
<dbReference type="InterPro" id="IPR002350">
    <property type="entry name" value="Kazal_dom"/>
</dbReference>
<dbReference type="InterPro" id="IPR036058">
    <property type="entry name" value="Kazal_dom_sf"/>
</dbReference>
<dbReference type="InterPro" id="IPR002223">
    <property type="entry name" value="Kunitz_BPTI"/>
</dbReference>
<dbReference type="InterPro" id="IPR036880">
    <property type="entry name" value="Kunitz_BPTI_sf"/>
</dbReference>
<dbReference type="InterPro" id="IPR001134">
    <property type="entry name" value="Netrin_domain"/>
</dbReference>
<dbReference type="InterPro" id="IPR020901">
    <property type="entry name" value="Prtase_inh_Kunz-CS"/>
</dbReference>
<dbReference type="InterPro" id="IPR008993">
    <property type="entry name" value="TIMP-like_OB-fold"/>
</dbReference>
<dbReference type="InterPro" id="IPR008197">
    <property type="entry name" value="WAP_dom"/>
</dbReference>
<dbReference type="InterPro" id="IPR033638">
    <property type="entry name" value="WFIKKN1/2_Ig-like_3"/>
</dbReference>
<dbReference type="PANTHER" id="PTHR45938">
    <property type="entry name" value="ACP24A4-RELATED"/>
    <property type="match status" value="1"/>
</dbReference>
<dbReference type="PANTHER" id="PTHR45938:SF6">
    <property type="entry name" value="WAP, KAZAL, IMMUNOGLOBULIN, KUNITZ AND NTR DOMAIN-CONTAINING PROTEIN 1"/>
    <property type="match status" value="1"/>
</dbReference>
<dbReference type="Pfam" id="PF13927">
    <property type="entry name" value="Ig_3"/>
    <property type="match status" value="1"/>
</dbReference>
<dbReference type="Pfam" id="PF00014">
    <property type="entry name" value="Kunitz_BPTI"/>
    <property type="match status" value="2"/>
</dbReference>
<dbReference type="Pfam" id="PF00095">
    <property type="entry name" value="WAP"/>
    <property type="match status" value="1"/>
</dbReference>
<dbReference type="PRINTS" id="PR00759">
    <property type="entry name" value="BASICPTASE"/>
</dbReference>
<dbReference type="SMART" id="SM00409">
    <property type="entry name" value="IG"/>
    <property type="match status" value="1"/>
</dbReference>
<dbReference type="SMART" id="SM00408">
    <property type="entry name" value="IGc2"/>
    <property type="match status" value="1"/>
</dbReference>
<dbReference type="SMART" id="SM00131">
    <property type="entry name" value="KU"/>
    <property type="match status" value="2"/>
</dbReference>
<dbReference type="SMART" id="SM00217">
    <property type="entry name" value="WAP"/>
    <property type="match status" value="1"/>
</dbReference>
<dbReference type="SUPFAM" id="SSF57362">
    <property type="entry name" value="BPTI-like"/>
    <property type="match status" value="2"/>
</dbReference>
<dbReference type="SUPFAM" id="SSF57256">
    <property type="entry name" value="Elafin-like"/>
    <property type="match status" value="1"/>
</dbReference>
<dbReference type="SUPFAM" id="SSF48726">
    <property type="entry name" value="Immunoglobulin"/>
    <property type="match status" value="1"/>
</dbReference>
<dbReference type="SUPFAM" id="SSF100895">
    <property type="entry name" value="Kazal-type serine protease inhibitors"/>
    <property type="match status" value="1"/>
</dbReference>
<dbReference type="SUPFAM" id="SSF50242">
    <property type="entry name" value="TIMP-like"/>
    <property type="match status" value="1"/>
</dbReference>
<dbReference type="PROSITE" id="PS00280">
    <property type="entry name" value="BPTI_KUNITZ_1"/>
    <property type="match status" value="1"/>
</dbReference>
<dbReference type="PROSITE" id="PS50279">
    <property type="entry name" value="BPTI_KUNITZ_2"/>
    <property type="match status" value="1"/>
</dbReference>
<dbReference type="PROSITE" id="PS50835">
    <property type="entry name" value="IG_LIKE"/>
    <property type="match status" value="1"/>
</dbReference>
<dbReference type="PROSITE" id="PS51465">
    <property type="entry name" value="KAZAL_2"/>
    <property type="match status" value="1"/>
</dbReference>
<dbReference type="PROSITE" id="PS50189">
    <property type="entry name" value="NTR"/>
    <property type="match status" value="1"/>
</dbReference>
<dbReference type="PROSITE" id="PS51390">
    <property type="entry name" value="WAP"/>
    <property type="match status" value="1"/>
</dbReference>
<organism>
    <name type="scientific">Rattus norvegicus</name>
    <name type="common">Rat</name>
    <dbReference type="NCBI Taxonomy" id="10116"/>
    <lineage>
        <taxon>Eukaryota</taxon>
        <taxon>Metazoa</taxon>
        <taxon>Chordata</taxon>
        <taxon>Craniata</taxon>
        <taxon>Vertebrata</taxon>
        <taxon>Euteleostomi</taxon>
        <taxon>Mammalia</taxon>
        <taxon>Eutheria</taxon>
        <taxon>Euarchontoglires</taxon>
        <taxon>Glires</taxon>
        <taxon>Rodentia</taxon>
        <taxon>Myomorpha</taxon>
        <taxon>Muroidea</taxon>
        <taxon>Muridae</taxon>
        <taxon>Murinae</taxon>
        <taxon>Rattus</taxon>
    </lineage>
</organism>
<comment type="function">
    <text evidence="1">Protease-inhibitor that contains multiple distinct protease inhibitor domains. Probably has serine protease- and metalloprotease-inhibitor activity (By similarity).</text>
</comment>
<comment type="subcellular location">
    <subcellularLocation>
        <location evidence="1">Secreted</location>
    </subcellularLocation>
</comment>
<comment type="tissue specificity">
    <text evidence="7">Preferentially expressed in the developing inner ear and the dorsal neural tube.</text>
</comment>
<comment type="developmental stage">
    <text evidence="7">In the inner ear, it is first detectable at embryonic day 11.5 (11.5 dpc), broadly in the dorsolateral region of the otocyst, which gives rise to the vestibular organ. At 12.5 dpc, it becomes restricted to the presumptive sensory region, mainly to the BMP4-positive presumptive cristae, and expression becomes reduced at later stages.</text>
</comment>
<comment type="domain">
    <text evidence="1">The second BPTI/Kunitz inhibitor domain is able to inhibit trypsin. It has however no activity toward chymotrypsin, elastase, plasmin, pancreatic kallikrein, lung tryptase, plasma kallikrein, thrombin, urokinase or tissue plasminogen activator (By similarity).</text>
</comment>
<comment type="similarity">
    <text evidence="8">Belongs to the WFIKKN family.</text>
</comment>
<sequence>MPAPQPLLPLLFAFVLIHLTSETNLLPEPGSHPGMCPNQLSPHLWVDAQSTCERECTRDQDCAASEKCCTNVCGLQSCVAARFPSGGPATPETAASCEDFQCPQQGSNCDIWDGQPVCRCRDRCEKEPSFTCASDGLTYYNRCYMDAEACLRGLHLHVVPCKHILSWPPSSPGPPETTARPTPGAAPMPPALYNSPSPQAVHVGGTASLHCDVSGRPPPAVTWEKQSHQRENLIMRPDQMYGNVVVTSIGQLVLYNAQLEDAGLYTCTARNAAGLLRADFPLSVLQRATTQDRDPGVLALAECQPDTQACVGPPTPHHVLWRFDPQRGSCMTFPALKCDGAARGFETYEACQQACVRGPGDVCALPPVQGPCQGWEPRWAYSPLLQQCHPFIYSGCEGNSNNFESRESCEDACPVPRTPPCRACRLKSKLALSLCRSDFAIVGRLTEVLEEPEAAGGIARVALDDVLKDDKMGLKFLGTKYLEVTLSGMDWACPCPNVTVGDGPLVIMGEVREGVAVLDANSYVRAASEKRVKKIVELLEKKACELLNRFQD</sequence>
<name>WFKN1_RAT</name>
<evidence type="ECO:0000250" key="1"/>
<evidence type="ECO:0000255" key="2"/>
<evidence type="ECO:0000255" key="3">
    <source>
        <dbReference type="PROSITE-ProRule" id="PRU00031"/>
    </source>
</evidence>
<evidence type="ECO:0000255" key="4">
    <source>
        <dbReference type="PROSITE-ProRule" id="PRU00295"/>
    </source>
</evidence>
<evidence type="ECO:0000255" key="5">
    <source>
        <dbReference type="PROSITE-ProRule" id="PRU00722"/>
    </source>
</evidence>
<evidence type="ECO:0000255" key="6">
    <source>
        <dbReference type="PROSITE-ProRule" id="PRU00798"/>
    </source>
</evidence>
<evidence type="ECO:0000269" key="7">
    <source>
    </source>
</evidence>
<evidence type="ECO:0000305" key="8"/>
<protein>
    <recommendedName>
        <fullName>WAP, Kazal, immunoglobulin, Kunitz and NTR domain-containing protein 1</fullName>
    </recommendedName>
</protein>
<feature type="signal peptide" evidence="2">
    <location>
        <begin position="1"/>
        <end position="25"/>
    </location>
</feature>
<feature type="chain" id="PRO_0000307818" description="WAP, Kazal, immunoglobulin, Kunitz and NTR domain-containing protein 1">
    <location>
        <begin position="26"/>
        <end position="552"/>
    </location>
</feature>
<feature type="domain" description="WAP" evidence="5">
    <location>
        <begin position="29"/>
        <end position="82"/>
    </location>
</feature>
<feature type="domain" description="Kazal-like" evidence="6">
    <location>
        <begin position="112"/>
        <end position="163"/>
    </location>
</feature>
<feature type="domain" description="Ig-like C2-type">
    <location>
        <begin position="190"/>
        <end position="283"/>
    </location>
</feature>
<feature type="domain" description="BPTI/Kunitz inhibitor 1" evidence="3">
    <location>
        <begin position="289"/>
        <end position="355"/>
    </location>
</feature>
<feature type="domain" description="BPTI/Kunitz inhibitor 2" evidence="3">
    <location>
        <begin position="363"/>
        <end position="413"/>
    </location>
</feature>
<feature type="domain" description="NTR" evidence="4">
    <location>
        <begin position="413"/>
        <end position="544"/>
    </location>
</feature>
<feature type="site" description="Reactive bond" evidence="6">
    <location>
        <begin position="126"/>
        <end position="127"/>
    </location>
</feature>
<feature type="glycosylation site" description="N-linked (GlcNAc...) asparagine" evidence="2">
    <location>
        <position position="497"/>
    </location>
</feature>
<feature type="disulfide bond" evidence="1">
    <location>
        <begin position="36"/>
        <end position="69"/>
    </location>
</feature>
<feature type="disulfide bond" evidence="1">
    <location>
        <begin position="52"/>
        <end position="73"/>
    </location>
</feature>
<feature type="disulfide bond" evidence="1">
    <location>
        <begin position="56"/>
        <end position="68"/>
    </location>
</feature>
<feature type="disulfide bond" evidence="1">
    <location>
        <begin position="62"/>
        <end position="78"/>
    </location>
</feature>
<feature type="disulfide bond" evidence="1">
    <location>
        <begin position="120"/>
        <end position="150"/>
    </location>
</feature>
<feature type="disulfide bond" evidence="1">
    <location>
        <begin position="124"/>
        <end position="143"/>
    </location>
</feature>
<feature type="disulfide bond" evidence="1">
    <location>
        <begin position="132"/>
        <end position="161"/>
    </location>
</feature>
<feature type="disulfide bond" evidence="1">
    <location>
        <begin position="211"/>
        <end position="267"/>
    </location>
</feature>
<feature type="disulfide bond" evidence="1">
    <location>
        <begin position="303"/>
        <end position="355"/>
    </location>
</feature>
<feature type="disulfide bond" evidence="1">
    <location>
        <begin position="310"/>
        <end position="338"/>
    </location>
</feature>
<feature type="disulfide bond" evidence="1">
    <location>
        <begin position="330"/>
        <end position="351"/>
    </location>
</feature>
<feature type="disulfide bond" evidence="1">
    <location>
        <begin position="363"/>
        <end position="413"/>
    </location>
</feature>
<feature type="disulfide bond" evidence="1">
    <location>
        <begin position="372"/>
        <end position="396"/>
    </location>
</feature>
<feature type="disulfide bond" evidence="1">
    <location>
        <begin position="388"/>
        <end position="409"/>
    </location>
</feature>
<feature type="disulfide bond" evidence="1">
    <location>
        <begin position="421"/>
        <end position="493"/>
    </location>
</feature>
<feature type="disulfide bond" evidence="1">
    <location>
        <begin position="424"/>
        <end position="495"/>
    </location>
</feature>
<feature type="disulfide bond" evidence="1">
    <location>
        <begin position="435"/>
        <end position="544"/>
    </location>
</feature>
<accession>P0C5J5</accession>
<keyword id="KW-1015">Disulfide bond</keyword>
<keyword id="KW-0325">Glycoprotein</keyword>
<keyword id="KW-0393">Immunoglobulin domain</keyword>
<keyword id="KW-0481">Metalloenzyme inhibitor</keyword>
<keyword id="KW-0483">Metalloprotease inhibitor</keyword>
<keyword id="KW-0646">Protease inhibitor</keyword>
<keyword id="KW-1185">Reference proteome</keyword>
<keyword id="KW-0677">Repeat</keyword>
<keyword id="KW-0964">Secreted</keyword>
<keyword id="KW-0722">Serine protease inhibitor</keyword>
<keyword id="KW-0732">Signal</keyword>
<reference key="1">
    <citation type="journal article" date="2004" name="Dev. Dyn.">
        <title>OC29 is preferentially expressed in the presumptive sensory organ region of the otocyst.</title>
        <authorList>
            <person name="Nishida A.T."/>
            <person name="Kobuke K."/>
            <person name="Kojima K."/>
            <person name="Ito J."/>
            <person name="Honjo T."/>
            <person name="Tashiro K."/>
        </authorList>
    </citation>
    <scope>NUCLEOTIDE SEQUENCE [MRNA]</scope>
    <scope>TISSUE SPECIFICITY</scope>
    <scope>DEVELOPMENTAL STAGE</scope>
</reference>
<reference key="2">
    <citation type="journal article" date="2004" name="Nature">
        <title>Genome sequence of the Brown Norway rat yields insights into mammalian evolution.</title>
        <authorList>
            <person name="Gibbs R.A."/>
            <person name="Weinstock G.M."/>
            <person name="Metzker M.L."/>
            <person name="Muzny D.M."/>
            <person name="Sodergren E.J."/>
            <person name="Scherer S."/>
            <person name="Scott G."/>
            <person name="Steffen D."/>
            <person name="Worley K.C."/>
            <person name="Burch P.E."/>
            <person name="Okwuonu G."/>
            <person name="Hines S."/>
            <person name="Lewis L."/>
            <person name="Deramo C."/>
            <person name="Delgado O."/>
            <person name="Dugan-Rocha S."/>
            <person name="Miner G."/>
            <person name="Morgan M."/>
            <person name="Hawes A."/>
            <person name="Gill R."/>
            <person name="Holt R.A."/>
            <person name="Adams M.D."/>
            <person name="Amanatides P.G."/>
            <person name="Baden-Tillson H."/>
            <person name="Barnstead M."/>
            <person name="Chin S."/>
            <person name="Evans C.A."/>
            <person name="Ferriera S."/>
            <person name="Fosler C."/>
            <person name="Glodek A."/>
            <person name="Gu Z."/>
            <person name="Jennings D."/>
            <person name="Kraft C.L."/>
            <person name="Nguyen T."/>
            <person name="Pfannkoch C.M."/>
            <person name="Sitter C."/>
            <person name="Sutton G.G."/>
            <person name="Venter J.C."/>
            <person name="Woodage T."/>
            <person name="Smith D."/>
            <person name="Lee H.-M."/>
            <person name="Gustafson E."/>
            <person name="Cahill P."/>
            <person name="Kana A."/>
            <person name="Doucette-Stamm L."/>
            <person name="Weinstock K."/>
            <person name="Fechtel K."/>
            <person name="Weiss R.B."/>
            <person name="Dunn D.M."/>
            <person name="Green E.D."/>
            <person name="Blakesley R.W."/>
            <person name="Bouffard G.G."/>
            <person name="De Jong P.J."/>
            <person name="Osoegawa K."/>
            <person name="Zhu B."/>
            <person name="Marra M."/>
            <person name="Schein J."/>
            <person name="Bosdet I."/>
            <person name="Fjell C."/>
            <person name="Jones S."/>
            <person name="Krzywinski M."/>
            <person name="Mathewson C."/>
            <person name="Siddiqui A."/>
            <person name="Wye N."/>
            <person name="McPherson J."/>
            <person name="Zhao S."/>
            <person name="Fraser C.M."/>
            <person name="Shetty J."/>
            <person name="Shatsman S."/>
            <person name="Geer K."/>
            <person name="Chen Y."/>
            <person name="Abramzon S."/>
            <person name="Nierman W.C."/>
            <person name="Havlak P.H."/>
            <person name="Chen R."/>
            <person name="Durbin K.J."/>
            <person name="Egan A."/>
            <person name="Ren Y."/>
            <person name="Song X.-Z."/>
            <person name="Li B."/>
            <person name="Liu Y."/>
            <person name="Qin X."/>
            <person name="Cawley S."/>
            <person name="Cooney A.J."/>
            <person name="D'Souza L.M."/>
            <person name="Martin K."/>
            <person name="Wu J.Q."/>
            <person name="Gonzalez-Garay M.L."/>
            <person name="Jackson A.R."/>
            <person name="Kalafus K.J."/>
            <person name="McLeod M.P."/>
            <person name="Milosavljevic A."/>
            <person name="Virk D."/>
            <person name="Volkov A."/>
            <person name="Wheeler D.A."/>
            <person name="Zhang Z."/>
            <person name="Bailey J.A."/>
            <person name="Eichler E.E."/>
            <person name="Tuzun E."/>
            <person name="Birney E."/>
            <person name="Mongin E."/>
            <person name="Ureta-Vidal A."/>
            <person name="Woodwark C."/>
            <person name="Zdobnov E."/>
            <person name="Bork P."/>
            <person name="Suyama M."/>
            <person name="Torrents D."/>
            <person name="Alexandersson M."/>
            <person name="Trask B.J."/>
            <person name="Young J.M."/>
            <person name="Huang H."/>
            <person name="Wang H."/>
            <person name="Xing H."/>
            <person name="Daniels S."/>
            <person name="Gietzen D."/>
            <person name="Schmidt J."/>
            <person name="Stevens K."/>
            <person name="Vitt U."/>
            <person name="Wingrove J."/>
            <person name="Camara F."/>
            <person name="Mar Alba M."/>
            <person name="Abril J.F."/>
            <person name="Guigo R."/>
            <person name="Smit A."/>
            <person name="Dubchak I."/>
            <person name="Rubin E.M."/>
            <person name="Couronne O."/>
            <person name="Poliakov A."/>
            <person name="Huebner N."/>
            <person name="Ganten D."/>
            <person name="Goesele C."/>
            <person name="Hummel O."/>
            <person name="Kreitler T."/>
            <person name="Lee Y.-A."/>
            <person name="Monti J."/>
            <person name="Schulz H."/>
            <person name="Zimdahl H."/>
            <person name="Himmelbauer H."/>
            <person name="Lehrach H."/>
            <person name="Jacob H.J."/>
            <person name="Bromberg S."/>
            <person name="Gullings-Handley J."/>
            <person name="Jensen-Seaman M.I."/>
            <person name="Kwitek A.E."/>
            <person name="Lazar J."/>
            <person name="Pasko D."/>
            <person name="Tonellato P.J."/>
            <person name="Twigger S."/>
            <person name="Ponting C.P."/>
            <person name="Duarte J.M."/>
            <person name="Rice S."/>
            <person name="Goodstadt L."/>
            <person name="Beatson S.A."/>
            <person name="Emes R.D."/>
            <person name="Winter E.E."/>
            <person name="Webber C."/>
            <person name="Brandt P."/>
            <person name="Nyakatura G."/>
            <person name="Adetobi M."/>
            <person name="Chiaromonte F."/>
            <person name="Elnitski L."/>
            <person name="Eswara P."/>
            <person name="Hardison R.C."/>
            <person name="Hou M."/>
            <person name="Kolbe D."/>
            <person name="Makova K."/>
            <person name="Miller W."/>
            <person name="Nekrutenko A."/>
            <person name="Riemer C."/>
            <person name="Schwartz S."/>
            <person name="Taylor J."/>
            <person name="Yang S."/>
            <person name="Zhang Y."/>
            <person name="Lindpaintner K."/>
            <person name="Andrews T.D."/>
            <person name="Caccamo M."/>
            <person name="Clamp M."/>
            <person name="Clarke L."/>
            <person name="Curwen V."/>
            <person name="Durbin R.M."/>
            <person name="Eyras E."/>
            <person name="Searle S.M."/>
            <person name="Cooper G.M."/>
            <person name="Batzoglou S."/>
            <person name="Brudno M."/>
            <person name="Sidow A."/>
            <person name="Stone E.A."/>
            <person name="Payseur B.A."/>
            <person name="Bourque G."/>
            <person name="Lopez-Otin C."/>
            <person name="Puente X.S."/>
            <person name="Chakrabarti K."/>
            <person name="Chatterji S."/>
            <person name="Dewey C."/>
            <person name="Pachter L."/>
            <person name="Bray N."/>
            <person name="Yap V.B."/>
            <person name="Caspi A."/>
            <person name="Tesler G."/>
            <person name="Pevzner P.A."/>
            <person name="Haussler D."/>
            <person name="Roskin K.M."/>
            <person name="Baertsch R."/>
            <person name="Clawson H."/>
            <person name="Furey T.S."/>
            <person name="Hinrichs A.S."/>
            <person name="Karolchik D."/>
            <person name="Kent W.J."/>
            <person name="Rosenbloom K.R."/>
            <person name="Trumbower H."/>
            <person name="Weirauch M."/>
            <person name="Cooper D.N."/>
            <person name="Stenson P.D."/>
            <person name="Ma B."/>
            <person name="Brent M."/>
            <person name="Arumugam M."/>
            <person name="Shteynberg D."/>
            <person name="Copley R.R."/>
            <person name="Taylor M.S."/>
            <person name="Riethman H."/>
            <person name="Mudunuri U."/>
            <person name="Peterson J."/>
            <person name="Guyer M."/>
            <person name="Felsenfeld A."/>
            <person name="Old S."/>
            <person name="Mockrin S."/>
            <person name="Collins F.S."/>
        </authorList>
    </citation>
    <scope>NUCLEOTIDE SEQUENCE [LARGE SCALE GENOMIC DNA]</scope>
    <source>
        <strain>Brown Norway</strain>
    </source>
</reference>